<proteinExistence type="evidence at protein level"/>
<feature type="signal peptide" evidence="1">
    <location>
        <begin position="1"/>
        <end position="20"/>
    </location>
</feature>
<feature type="propeptide" id="PRO_0000033704" evidence="1">
    <location>
        <begin position="21"/>
        <end position="308"/>
    </location>
</feature>
<feature type="chain" id="PRO_0000033705" description="Inhibin beta A chain">
    <location>
        <begin position="309"/>
        <end position="424"/>
    </location>
</feature>
<feature type="region of interest" description="Disordered" evidence="3">
    <location>
        <begin position="178"/>
        <end position="200"/>
    </location>
</feature>
<feature type="region of interest" description="Disordered" evidence="3">
    <location>
        <begin position="260"/>
        <end position="288"/>
    </location>
</feature>
<feature type="compositionally biased region" description="Basic and acidic residues" evidence="3">
    <location>
        <begin position="263"/>
        <end position="275"/>
    </location>
</feature>
<feature type="glycosylation site" description="N-linked (GlcNAc...) asparagine" evidence="2">
    <location>
        <position position="165"/>
    </location>
</feature>
<feature type="disulfide bond" evidence="1">
    <location>
        <begin position="312"/>
        <end position="320"/>
    </location>
</feature>
<feature type="disulfide bond" evidence="1">
    <location>
        <begin position="319"/>
        <end position="389"/>
    </location>
</feature>
<feature type="disulfide bond" evidence="1">
    <location>
        <begin position="348"/>
        <end position="421"/>
    </location>
</feature>
<feature type="disulfide bond" evidence="1">
    <location>
        <begin position="352"/>
        <end position="423"/>
    </location>
</feature>
<feature type="disulfide bond" description="Interchain" evidence="1">
    <location>
        <position position="388"/>
    </location>
</feature>
<feature type="sequence conflict" description="In Ref. 2; AAC59738." evidence="4" ref="2">
    <original>A</original>
    <variation>T</variation>
    <location>
        <position position="33"/>
    </location>
</feature>
<feature type="sequence conflict" description="In Ref. 2; AAC59738." evidence="4" ref="2">
    <original>T</original>
    <variation>I</variation>
    <location>
        <position position="87"/>
    </location>
</feature>
<feature type="sequence conflict" description="In Ref. 2; AAC59738." evidence="4" ref="2">
    <original>A</original>
    <variation>G</variation>
    <location>
        <position position="188"/>
    </location>
</feature>
<feature type="sequence conflict" description="In Ref. 2; AAC59738." evidence="4" ref="2">
    <original>A</original>
    <variation>T</variation>
    <location>
        <position position="213"/>
    </location>
</feature>
<feature type="sequence conflict" description="In Ref. 2; AAC59738." evidence="4" ref="2">
    <original>Q</original>
    <variation>K</variation>
    <location>
        <position position="235"/>
    </location>
</feature>
<feature type="sequence conflict" description="In Ref. 2; AAC59738." evidence="4" ref="2">
    <original>E</original>
    <variation>R</variation>
    <location>
        <position position="307"/>
    </location>
</feature>
<feature type="sequence conflict" description="In Ref. 2; AAC59738." evidence="4" ref="2">
    <original>E</original>
    <variation>G</variation>
    <location>
        <position position="350"/>
    </location>
</feature>
<sequence length="424" mass="47574">MPLLWKRGFLLVICWIIVRSSPTPGSEGHSSVADCPSCALTTLSKDVPSSQPEMVEAVKKHILNMLHLRDRPNITQPVPKAALLNATKKLHVGKVGDDGYVEIEDDVGRRAEMNEVVEQTSEIITFAESGTPKKTLHFEISKEGSELSVVEHAEVWLFLKVSKANRSRTKVTIRLFQQQRQPKGNSEAAEDMEDMGLKGERSETLISEKAVDARKSTWHIFPISSSVQRLLDQGQSSLDVRIACDLCQETGASLVLLGKKKKKEDDGEGKEKDGGELTGEEEKEQSHRPFLMMLARHSEDRQHRRRERGLECDGKVNICCKKQFFVSFKDIGWSDWIIAPTGYHANYCEEECPSHIAGTSGSSLSFHSTVINHYRMRGHSPFANLKSCCVPTKLRPMSMLYYDDGQNIIKKDIQNMIVEECGCS</sequence>
<evidence type="ECO:0000250" key="1"/>
<evidence type="ECO:0000255" key="2"/>
<evidence type="ECO:0000256" key="3">
    <source>
        <dbReference type="SAM" id="MobiDB-lite"/>
    </source>
</evidence>
<evidence type="ECO:0000305" key="4"/>
<organism>
    <name type="scientific">Gallus gallus</name>
    <name type="common">Chicken</name>
    <dbReference type="NCBI Taxonomy" id="9031"/>
    <lineage>
        <taxon>Eukaryota</taxon>
        <taxon>Metazoa</taxon>
        <taxon>Chordata</taxon>
        <taxon>Craniata</taxon>
        <taxon>Vertebrata</taxon>
        <taxon>Euteleostomi</taxon>
        <taxon>Archelosauria</taxon>
        <taxon>Archosauria</taxon>
        <taxon>Dinosauria</taxon>
        <taxon>Saurischia</taxon>
        <taxon>Theropoda</taxon>
        <taxon>Coelurosauria</taxon>
        <taxon>Aves</taxon>
        <taxon>Neognathae</taxon>
        <taxon>Galloanserae</taxon>
        <taxon>Galliformes</taxon>
        <taxon>Phasianidae</taxon>
        <taxon>Phasianinae</taxon>
        <taxon>Gallus</taxon>
    </lineage>
</organism>
<comment type="function">
    <text>Inhibins and activins inhibit and activate, respectively, the secretion of follitropin by the pituitary gland. Inhibins/activins are involved in regulating a number of diverse functions such as hypothalamic and pituitary hormone secretion, gonadal hormone secretion, germ cell development and maturation, erythroid differentiation, insulin secretion, nerve cell survival, embryonic axial development or bone growth, depending on their subunit composition. Inhibins appear to oppose the functions of activins. Induces somatostatin in the ciliary ganglion neurons and may play a role in regulating neurotransmitter phenotype.</text>
</comment>
<comment type="subunit">
    <text>Dimeric, linked by one or more disulfide bonds. Inhibin A is a dimer of alpha and beta-A. Inhibin B is a dimer of alpha and beta-B. Activin A is a homodimer of beta-A. Activin B is a homodimer of beta-B. Activin AB is a dimer of beta-A and beta-B.</text>
</comment>
<comment type="subcellular location">
    <subcellularLocation>
        <location>Secreted</location>
    </subcellularLocation>
</comment>
<comment type="tissue specificity">
    <text>Ciliary ganglion neurons. Levels are higher in the choroid than the iris.</text>
</comment>
<comment type="developmental stage">
    <text>Levels increase in the iris from embryonic day 9 (9 dpc) to 16 dpc and in the choroid, levels are high from 9 dpc to 14 dpc but drop at 16 dpc.</text>
</comment>
<comment type="similarity">
    <text evidence="4">Belongs to the TGF-beta family.</text>
</comment>
<name>INHBA_CHICK</name>
<dbReference type="EMBL" id="U26946">
    <property type="protein sequence ID" value="AAA68174.1"/>
    <property type="molecule type" value="mRNA"/>
</dbReference>
<dbReference type="EMBL" id="U42377">
    <property type="protein sequence ID" value="AAC59738.1"/>
    <property type="molecule type" value="mRNA"/>
</dbReference>
<dbReference type="EMBL" id="M61167">
    <property type="protein sequence ID" value="AAA48569.1"/>
    <property type="molecule type" value="mRNA"/>
</dbReference>
<dbReference type="EMBL" id="M57407">
    <property type="protein sequence ID" value="AAA03080.1"/>
    <property type="molecule type" value="mRNA"/>
</dbReference>
<dbReference type="PIR" id="B36193">
    <property type="entry name" value="B36193"/>
</dbReference>
<dbReference type="RefSeq" id="NP_990727.1">
    <property type="nucleotide sequence ID" value="NM_205396.1"/>
</dbReference>
<dbReference type="SMR" id="P27092"/>
<dbReference type="FunCoup" id="P27092">
    <property type="interactions" value="304"/>
</dbReference>
<dbReference type="STRING" id="9031.ENSGALP00000044244"/>
<dbReference type="GlyCosmos" id="P27092">
    <property type="glycosylation" value="1 site, No reported glycans"/>
</dbReference>
<dbReference type="GlyGen" id="P27092">
    <property type="glycosylation" value="2 sites"/>
</dbReference>
<dbReference type="PaxDb" id="9031-ENSGALP00000036647"/>
<dbReference type="GeneID" id="396361"/>
<dbReference type="KEGG" id="gga:396361"/>
<dbReference type="CTD" id="3624"/>
<dbReference type="VEuPathDB" id="HostDB:geneid_396361"/>
<dbReference type="eggNOG" id="KOG3900">
    <property type="taxonomic scope" value="Eukaryota"/>
</dbReference>
<dbReference type="InParanoid" id="P27092"/>
<dbReference type="OrthoDB" id="6516235at2759"/>
<dbReference type="PhylomeDB" id="P27092"/>
<dbReference type="PRO" id="PR:P27092"/>
<dbReference type="Proteomes" id="UP000000539">
    <property type="component" value="Unassembled WGS sequence"/>
</dbReference>
<dbReference type="GO" id="GO:0043509">
    <property type="term" value="C:activin A complex"/>
    <property type="evidence" value="ECO:0000250"/>
    <property type="project" value="UniProtKB"/>
</dbReference>
<dbReference type="GO" id="GO:0005576">
    <property type="term" value="C:extracellular region"/>
    <property type="evidence" value="ECO:0000250"/>
    <property type="project" value="UniProtKB"/>
</dbReference>
<dbReference type="GO" id="GO:0005615">
    <property type="term" value="C:extracellular space"/>
    <property type="evidence" value="ECO:0000318"/>
    <property type="project" value="GO_Central"/>
</dbReference>
<dbReference type="GO" id="GO:0043512">
    <property type="term" value="C:inhibin A complex"/>
    <property type="evidence" value="ECO:0000250"/>
    <property type="project" value="UniProtKB"/>
</dbReference>
<dbReference type="GO" id="GO:0005125">
    <property type="term" value="F:cytokine activity"/>
    <property type="evidence" value="ECO:0000250"/>
    <property type="project" value="UniProtKB"/>
</dbReference>
<dbReference type="GO" id="GO:0008083">
    <property type="term" value="F:growth factor activity"/>
    <property type="evidence" value="ECO:0007669"/>
    <property type="project" value="UniProtKB-KW"/>
</dbReference>
<dbReference type="GO" id="GO:0005179">
    <property type="term" value="F:hormone activity"/>
    <property type="evidence" value="ECO:0007669"/>
    <property type="project" value="UniProtKB-KW"/>
</dbReference>
<dbReference type="GO" id="GO:0032924">
    <property type="term" value="P:activin receptor signaling pathway"/>
    <property type="evidence" value="ECO:0000250"/>
    <property type="project" value="UniProtKB"/>
</dbReference>
<dbReference type="GO" id="GO:0002244">
    <property type="term" value="P:hematopoietic progenitor cell differentiation"/>
    <property type="evidence" value="ECO:0000250"/>
    <property type="project" value="UniProtKB"/>
</dbReference>
<dbReference type="GO" id="GO:0042541">
    <property type="term" value="P:hemoglobin biosynthetic process"/>
    <property type="evidence" value="ECO:0000250"/>
    <property type="project" value="UniProtKB"/>
</dbReference>
<dbReference type="GO" id="GO:0008584">
    <property type="term" value="P:male gonad development"/>
    <property type="evidence" value="ECO:0000250"/>
    <property type="project" value="UniProtKB"/>
</dbReference>
<dbReference type="GO" id="GO:0007498">
    <property type="term" value="P:mesoderm development"/>
    <property type="evidence" value="ECO:0000303"/>
    <property type="project" value="UniProtKB"/>
</dbReference>
<dbReference type="GO" id="GO:0030308">
    <property type="term" value="P:negative regulation of cell growth"/>
    <property type="evidence" value="ECO:0000250"/>
    <property type="project" value="UniProtKB"/>
</dbReference>
<dbReference type="GO" id="GO:0008285">
    <property type="term" value="P:negative regulation of cell population proliferation"/>
    <property type="evidence" value="ECO:0000250"/>
    <property type="project" value="UniProtKB"/>
</dbReference>
<dbReference type="GO" id="GO:2000134">
    <property type="term" value="P:negative regulation of G1/S transition of mitotic cell cycle"/>
    <property type="evidence" value="ECO:0000250"/>
    <property type="project" value="UniProtKB"/>
</dbReference>
<dbReference type="GO" id="GO:0001541">
    <property type="term" value="P:ovarian follicle development"/>
    <property type="evidence" value="ECO:0000250"/>
    <property type="project" value="UniProtKB"/>
</dbReference>
<dbReference type="GO" id="GO:0045648">
    <property type="term" value="P:positive regulation of erythrocyte differentiation"/>
    <property type="evidence" value="ECO:0000250"/>
    <property type="project" value="UniProtKB"/>
</dbReference>
<dbReference type="GO" id="GO:2001241">
    <property type="term" value="P:positive regulation of extrinsic apoptotic signaling pathway in absence of ligand"/>
    <property type="evidence" value="ECO:0000250"/>
    <property type="project" value="UniProtKB"/>
</dbReference>
<dbReference type="GO" id="GO:0045944">
    <property type="term" value="P:positive regulation of transcription by RNA polymerase II"/>
    <property type="evidence" value="ECO:0000250"/>
    <property type="project" value="UniProtKB"/>
</dbReference>
<dbReference type="GO" id="GO:0042701">
    <property type="term" value="P:progesterone secretion"/>
    <property type="evidence" value="ECO:0000250"/>
    <property type="project" value="UniProtKB"/>
</dbReference>
<dbReference type="GO" id="GO:0046880">
    <property type="term" value="P:regulation of follicle-stimulating hormone secretion"/>
    <property type="evidence" value="ECO:0000250"/>
    <property type="project" value="UniProtKB"/>
</dbReference>
<dbReference type="GO" id="GO:0006357">
    <property type="term" value="P:regulation of transcription by RNA polymerase II"/>
    <property type="evidence" value="ECO:0000250"/>
    <property type="project" value="UniProtKB"/>
</dbReference>
<dbReference type="GO" id="GO:0060021">
    <property type="term" value="P:roof of mouth development"/>
    <property type="evidence" value="ECO:0000250"/>
    <property type="project" value="UniProtKB"/>
</dbReference>
<dbReference type="CDD" id="cd19404">
    <property type="entry name" value="TGF_beta_INHBA"/>
    <property type="match status" value="1"/>
</dbReference>
<dbReference type="FunFam" id="2.10.90.10:FF:000005">
    <property type="entry name" value="Inhibin beta A chain"/>
    <property type="match status" value="1"/>
</dbReference>
<dbReference type="FunFam" id="2.60.120.970:FF:000007">
    <property type="entry name" value="Inhibin beta A chain"/>
    <property type="match status" value="1"/>
</dbReference>
<dbReference type="Gene3D" id="2.60.120.970">
    <property type="match status" value="1"/>
</dbReference>
<dbReference type="Gene3D" id="2.10.90.10">
    <property type="entry name" value="Cystine-knot cytokines"/>
    <property type="match status" value="1"/>
</dbReference>
<dbReference type="InterPro" id="IPR029034">
    <property type="entry name" value="Cystine-knot_cytokine"/>
</dbReference>
<dbReference type="InterPro" id="IPR000491">
    <property type="entry name" value="Inhibin_betaA"/>
</dbReference>
<dbReference type="InterPro" id="IPR001839">
    <property type="entry name" value="TGF-b_C"/>
</dbReference>
<dbReference type="InterPro" id="IPR001111">
    <property type="entry name" value="TGF-b_propeptide"/>
</dbReference>
<dbReference type="InterPro" id="IPR015615">
    <property type="entry name" value="TGF-beta-rel"/>
</dbReference>
<dbReference type="PANTHER" id="PTHR11848:SF133">
    <property type="entry name" value="INHIBIN BETA A CHAIN"/>
    <property type="match status" value="1"/>
</dbReference>
<dbReference type="PANTHER" id="PTHR11848">
    <property type="entry name" value="TGF-BETA FAMILY"/>
    <property type="match status" value="1"/>
</dbReference>
<dbReference type="Pfam" id="PF00019">
    <property type="entry name" value="TGF_beta"/>
    <property type="match status" value="1"/>
</dbReference>
<dbReference type="Pfam" id="PF00688">
    <property type="entry name" value="TGFb_propeptide"/>
    <property type="match status" value="1"/>
</dbReference>
<dbReference type="PRINTS" id="PR00670">
    <property type="entry name" value="INHIBINBA"/>
</dbReference>
<dbReference type="SMART" id="SM00204">
    <property type="entry name" value="TGFB"/>
    <property type="match status" value="1"/>
</dbReference>
<dbReference type="SUPFAM" id="SSF57501">
    <property type="entry name" value="Cystine-knot cytokines"/>
    <property type="match status" value="1"/>
</dbReference>
<dbReference type="PROSITE" id="PS51362">
    <property type="entry name" value="TGF_BETA_2"/>
    <property type="match status" value="1"/>
</dbReference>
<gene>
    <name type="primary">INHBA</name>
</gene>
<accession>P27092</accession>
<accession>Q90697</accession>
<protein>
    <recommendedName>
        <fullName>Inhibin beta A chain</fullName>
    </recommendedName>
    <alternativeName>
        <fullName>Activin beta-A chain</fullName>
    </alternativeName>
</protein>
<reference key="1">
    <citation type="submission" date="1995-05" db="EMBL/GenBank/DDBJ databases">
        <authorList>
            <person name="Huang J.X."/>
        </authorList>
    </citation>
    <scope>NUCLEOTIDE SEQUENCE [MRNA]</scope>
    <source>
        <strain>White leghorn</strain>
    </source>
</reference>
<reference key="2">
    <citation type="journal article" date="1996" name="Biol. Reprod.">
        <title>Molecular cloning of inhibin/activin beta A-subunit complementary deoxyribonucleic acid and expression of inhibin/activin alpha- and beta A-subunits in the domestic hen.</title>
        <authorList>
            <person name="Chen C.C."/>
            <person name="Johnson P.A."/>
        </authorList>
    </citation>
    <scope>NUCLEOTIDE SEQUENCE [MRNA]</scope>
    <source>
        <strain>White leghorn</strain>
    </source>
</reference>
<reference key="3">
    <citation type="journal article" date="1990" name="Cell">
        <title>Activin can induce the formation of axial structures and is expressed in the hypoblast of the chick.</title>
        <authorList>
            <person name="Mitrani E."/>
            <person name="Ziv T."/>
            <person name="Thomsen G."/>
            <person name="Shimoni Y."/>
            <person name="Melton D.A."/>
            <person name="Bril A."/>
        </authorList>
    </citation>
    <scope>NUCLEOTIDE SEQUENCE [MRNA] OF 317-349</scope>
    <source>
        <tissue>Hypoblast</tissue>
    </source>
</reference>
<reference key="4">
    <citation type="journal article" date="1995" name="Neuron">
        <title>Activin A and follistatin expression in developing targets of ciliary ganglion neurons suggests a role in regulating neurotransmitter phenotype.</title>
        <authorList>
            <person name="Darland D.C."/>
            <person name="Link B.A."/>
            <person name="Nishi R."/>
        </authorList>
    </citation>
    <scope>CHARACTERIZATION</scope>
</reference>
<keyword id="KW-1015">Disulfide bond</keyword>
<keyword id="KW-0325">Glycoprotein</keyword>
<keyword id="KW-0339">Growth factor</keyword>
<keyword id="KW-0372">Hormone</keyword>
<keyword id="KW-1185">Reference proteome</keyword>
<keyword id="KW-0964">Secreted</keyword>
<keyword id="KW-0732">Signal</keyword>